<gene>
    <name evidence="1" type="primary">acpP</name>
    <name type="ordered locus">Sala_0280</name>
</gene>
<organism>
    <name type="scientific">Sphingopyxis alaskensis (strain DSM 13593 / LMG 18877 / RB2256)</name>
    <name type="common">Sphingomonas alaskensis</name>
    <dbReference type="NCBI Taxonomy" id="317655"/>
    <lineage>
        <taxon>Bacteria</taxon>
        <taxon>Pseudomonadati</taxon>
        <taxon>Pseudomonadota</taxon>
        <taxon>Alphaproteobacteria</taxon>
        <taxon>Sphingomonadales</taxon>
        <taxon>Sphingomonadaceae</taxon>
        <taxon>Sphingopyxis</taxon>
    </lineage>
</organism>
<reference key="1">
    <citation type="journal article" date="2009" name="Proc. Natl. Acad. Sci. U.S.A.">
        <title>The genomic basis of trophic strategy in marine bacteria.</title>
        <authorList>
            <person name="Lauro F.M."/>
            <person name="McDougald D."/>
            <person name="Thomas T."/>
            <person name="Williams T.J."/>
            <person name="Egan S."/>
            <person name="Rice S."/>
            <person name="DeMaere M.Z."/>
            <person name="Ting L."/>
            <person name="Ertan H."/>
            <person name="Johnson J."/>
            <person name="Ferriera S."/>
            <person name="Lapidus A."/>
            <person name="Anderson I."/>
            <person name="Kyrpides N."/>
            <person name="Munk A.C."/>
            <person name="Detter C."/>
            <person name="Han C.S."/>
            <person name="Brown M.V."/>
            <person name="Robb F.T."/>
            <person name="Kjelleberg S."/>
            <person name="Cavicchioli R."/>
        </authorList>
    </citation>
    <scope>NUCLEOTIDE SEQUENCE [LARGE SCALE GENOMIC DNA]</scope>
    <source>
        <strain>DSM 13593 / LMG 18877 / RB2256</strain>
    </source>
</reference>
<feature type="chain" id="PRO_1000066696" description="Acyl carrier protein">
    <location>
        <begin position="1"/>
        <end position="78"/>
    </location>
</feature>
<feature type="domain" description="Carrier" evidence="2">
    <location>
        <begin position="2"/>
        <end position="77"/>
    </location>
</feature>
<feature type="modified residue" description="O-(pantetheine 4'-phosphoryl)serine" evidence="2">
    <location>
        <position position="37"/>
    </location>
</feature>
<evidence type="ECO:0000255" key="1">
    <source>
        <dbReference type="HAMAP-Rule" id="MF_01217"/>
    </source>
</evidence>
<evidence type="ECO:0000255" key="2">
    <source>
        <dbReference type="PROSITE-ProRule" id="PRU00258"/>
    </source>
</evidence>
<proteinExistence type="inferred from homology"/>
<sequence length="78" mass="8457">MSDSAEKVKKIVVEHLGVEADKVTEEASFIDDLGADSLDIVELVMAFEEEFGVEIPDDAAEKIATVKDAIDYIEANKG</sequence>
<accession>Q1GWG9</accession>
<dbReference type="EMBL" id="CP000356">
    <property type="protein sequence ID" value="ABF52003.1"/>
    <property type="molecule type" value="Genomic_DNA"/>
</dbReference>
<dbReference type="RefSeq" id="WP_003039428.1">
    <property type="nucleotide sequence ID" value="NC_008048.1"/>
</dbReference>
<dbReference type="SMR" id="Q1GWG9"/>
<dbReference type="STRING" id="317655.Sala_0280"/>
<dbReference type="KEGG" id="sal:Sala_0280"/>
<dbReference type="eggNOG" id="COG0236">
    <property type="taxonomic scope" value="Bacteria"/>
</dbReference>
<dbReference type="HOGENOM" id="CLU_108696_5_1_5"/>
<dbReference type="OrthoDB" id="9804551at2"/>
<dbReference type="UniPathway" id="UPA00094"/>
<dbReference type="Proteomes" id="UP000006578">
    <property type="component" value="Chromosome"/>
</dbReference>
<dbReference type="GO" id="GO:0005829">
    <property type="term" value="C:cytosol"/>
    <property type="evidence" value="ECO:0007669"/>
    <property type="project" value="TreeGrafter"/>
</dbReference>
<dbReference type="GO" id="GO:0016020">
    <property type="term" value="C:membrane"/>
    <property type="evidence" value="ECO:0007669"/>
    <property type="project" value="GOC"/>
</dbReference>
<dbReference type="GO" id="GO:0000035">
    <property type="term" value="F:acyl binding"/>
    <property type="evidence" value="ECO:0007669"/>
    <property type="project" value="TreeGrafter"/>
</dbReference>
<dbReference type="GO" id="GO:0000036">
    <property type="term" value="F:acyl carrier activity"/>
    <property type="evidence" value="ECO:0007669"/>
    <property type="project" value="UniProtKB-UniRule"/>
</dbReference>
<dbReference type="GO" id="GO:0009245">
    <property type="term" value="P:lipid A biosynthetic process"/>
    <property type="evidence" value="ECO:0007669"/>
    <property type="project" value="TreeGrafter"/>
</dbReference>
<dbReference type="FunFam" id="1.10.1200.10:FF:000001">
    <property type="entry name" value="Acyl carrier protein"/>
    <property type="match status" value="1"/>
</dbReference>
<dbReference type="Gene3D" id="1.10.1200.10">
    <property type="entry name" value="ACP-like"/>
    <property type="match status" value="1"/>
</dbReference>
<dbReference type="HAMAP" id="MF_01217">
    <property type="entry name" value="Acyl_carrier"/>
    <property type="match status" value="1"/>
</dbReference>
<dbReference type="InterPro" id="IPR003231">
    <property type="entry name" value="ACP"/>
</dbReference>
<dbReference type="InterPro" id="IPR036736">
    <property type="entry name" value="ACP-like_sf"/>
</dbReference>
<dbReference type="InterPro" id="IPR009081">
    <property type="entry name" value="PP-bd_ACP"/>
</dbReference>
<dbReference type="InterPro" id="IPR006162">
    <property type="entry name" value="Ppantetheine_attach_site"/>
</dbReference>
<dbReference type="NCBIfam" id="TIGR00517">
    <property type="entry name" value="acyl_carrier"/>
    <property type="match status" value="1"/>
</dbReference>
<dbReference type="NCBIfam" id="NF002148">
    <property type="entry name" value="PRK00982.1-2"/>
    <property type="match status" value="1"/>
</dbReference>
<dbReference type="NCBIfam" id="NF002149">
    <property type="entry name" value="PRK00982.1-3"/>
    <property type="match status" value="1"/>
</dbReference>
<dbReference type="NCBIfam" id="NF002150">
    <property type="entry name" value="PRK00982.1-4"/>
    <property type="match status" value="1"/>
</dbReference>
<dbReference type="NCBIfam" id="NF002151">
    <property type="entry name" value="PRK00982.1-5"/>
    <property type="match status" value="1"/>
</dbReference>
<dbReference type="PANTHER" id="PTHR20863">
    <property type="entry name" value="ACYL CARRIER PROTEIN"/>
    <property type="match status" value="1"/>
</dbReference>
<dbReference type="PANTHER" id="PTHR20863:SF76">
    <property type="entry name" value="CARRIER DOMAIN-CONTAINING PROTEIN"/>
    <property type="match status" value="1"/>
</dbReference>
<dbReference type="Pfam" id="PF00550">
    <property type="entry name" value="PP-binding"/>
    <property type="match status" value="1"/>
</dbReference>
<dbReference type="SUPFAM" id="SSF47336">
    <property type="entry name" value="ACP-like"/>
    <property type="match status" value="1"/>
</dbReference>
<dbReference type="PROSITE" id="PS50075">
    <property type="entry name" value="CARRIER"/>
    <property type="match status" value="1"/>
</dbReference>
<dbReference type="PROSITE" id="PS00012">
    <property type="entry name" value="PHOSPHOPANTETHEINE"/>
    <property type="match status" value="1"/>
</dbReference>
<name>ACP_SPHAL</name>
<comment type="function">
    <text evidence="1">Carrier of the growing fatty acid chain in fatty acid biosynthesis.</text>
</comment>
<comment type="pathway">
    <text evidence="1">Lipid metabolism; fatty acid biosynthesis.</text>
</comment>
<comment type="subcellular location">
    <subcellularLocation>
        <location evidence="1">Cytoplasm</location>
    </subcellularLocation>
</comment>
<comment type="PTM">
    <text evidence="1">4'-phosphopantetheine is transferred from CoA to a specific serine of apo-ACP by AcpS. This modification is essential for activity because fatty acids are bound in thioester linkage to the sulfhydryl of the prosthetic group.</text>
</comment>
<comment type="similarity">
    <text evidence="1">Belongs to the acyl carrier protein (ACP) family.</text>
</comment>
<keyword id="KW-0963">Cytoplasm</keyword>
<keyword id="KW-0275">Fatty acid biosynthesis</keyword>
<keyword id="KW-0276">Fatty acid metabolism</keyword>
<keyword id="KW-0444">Lipid biosynthesis</keyword>
<keyword id="KW-0443">Lipid metabolism</keyword>
<keyword id="KW-0596">Phosphopantetheine</keyword>
<keyword id="KW-0597">Phosphoprotein</keyword>
<keyword id="KW-1185">Reference proteome</keyword>
<protein>
    <recommendedName>
        <fullName evidence="1">Acyl carrier protein</fullName>
        <shortName evidence="1">ACP</shortName>
    </recommendedName>
</protein>